<organism>
    <name type="scientific">Lawsonia intracellularis (strain PHE/MN1-00)</name>
    <dbReference type="NCBI Taxonomy" id="363253"/>
    <lineage>
        <taxon>Bacteria</taxon>
        <taxon>Pseudomonadati</taxon>
        <taxon>Thermodesulfobacteriota</taxon>
        <taxon>Desulfovibrionia</taxon>
        <taxon>Desulfovibrionales</taxon>
        <taxon>Desulfovibrionaceae</taxon>
        <taxon>Lawsonia</taxon>
    </lineage>
</organism>
<dbReference type="EC" id="2.5.1.7" evidence="1"/>
<dbReference type="EMBL" id="AM180252">
    <property type="protein sequence ID" value="CAJ54892.1"/>
    <property type="molecule type" value="Genomic_DNA"/>
</dbReference>
<dbReference type="RefSeq" id="WP_011526921.1">
    <property type="nucleotide sequence ID" value="NC_008011.1"/>
</dbReference>
<dbReference type="SMR" id="Q1MQ35"/>
<dbReference type="STRING" id="363253.LI0838"/>
<dbReference type="KEGG" id="lip:LI0838"/>
<dbReference type="eggNOG" id="COG0766">
    <property type="taxonomic scope" value="Bacteria"/>
</dbReference>
<dbReference type="HOGENOM" id="CLU_027387_0_0_7"/>
<dbReference type="OrthoDB" id="9803760at2"/>
<dbReference type="UniPathway" id="UPA00219"/>
<dbReference type="Proteomes" id="UP000002430">
    <property type="component" value="Chromosome"/>
</dbReference>
<dbReference type="GO" id="GO:0005737">
    <property type="term" value="C:cytoplasm"/>
    <property type="evidence" value="ECO:0007669"/>
    <property type="project" value="UniProtKB-SubCell"/>
</dbReference>
<dbReference type="GO" id="GO:0008760">
    <property type="term" value="F:UDP-N-acetylglucosamine 1-carboxyvinyltransferase activity"/>
    <property type="evidence" value="ECO:0007669"/>
    <property type="project" value="UniProtKB-UniRule"/>
</dbReference>
<dbReference type="GO" id="GO:0051301">
    <property type="term" value="P:cell division"/>
    <property type="evidence" value="ECO:0007669"/>
    <property type="project" value="UniProtKB-KW"/>
</dbReference>
<dbReference type="GO" id="GO:0071555">
    <property type="term" value="P:cell wall organization"/>
    <property type="evidence" value="ECO:0007669"/>
    <property type="project" value="UniProtKB-KW"/>
</dbReference>
<dbReference type="GO" id="GO:0009252">
    <property type="term" value="P:peptidoglycan biosynthetic process"/>
    <property type="evidence" value="ECO:0007669"/>
    <property type="project" value="UniProtKB-UniRule"/>
</dbReference>
<dbReference type="GO" id="GO:0008360">
    <property type="term" value="P:regulation of cell shape"/>
    <property type="evidence" value="ECO:0007669"/>
    <property type="project" value="UniProtKB-KW"/>
</dbReference>
<dbReference type="GO" id="GO:0019277">
    <property type="term" value="P:UDP-N-acetylgalactosamine biosynthetic process"/>
    <property type="evidence" value="ECO:0007669"/>
    <property type="project" value="InterPro"/>
</dbReference>
<dbReference type="CDD" id="cd01555">
    <property type="entry name" value="UdpNAET"/>
    <property type="match status" value="1"/>
</dbReference>
<dbReference type="FunFam" id="3.65.10.10:FF:000001">
    <property type="entry name" value="UDP-N-acetylglucosamine 1-carboxyvinyltransferase"/>
    <property type="match status" value="1"/>
</dbReference>
<dbReference type="Gene3D" id="3.65.10.10">
    <property type="entry name" value="Enolpyruvate transferase domain"/>
    <property type="match status" value="2"/>
</dbReference>
<dbReference type="HAMAP" id="MF_00111">
    <property type="entry name" value="MurA"/>
    <property type="match status" value="1"/>
</dbReference>
<dbReference type="InterPro" id="IPR001986">
    <property type="entry name" value="Enolpyruvate_Tfrase_dom"/>
</dbReference>
<dbReference type="InterPro" id="IPR036968">
    <property type="entry name" value="Enolpyruvate_Tfrase_sf"/>
</dbReference>
<dbReference type="InterPro" id="IPR050068">
    <property type="entry name" value="MurA_subfamily"/>
</dbReference>
<dbReference type="InterPro" id="IPR013792">
    <property type="entry name" value="RNA3'P_cycl/enolpyr_Trfase_a/b"/>
</dbReference>
<dbReference type="InterPro" id="IPR005750">
    <property type="entry name" value="UDP_GlcNAc_COvinyl_MurA"/>
</dbReference>
<dbReference type="NCBIfam" id="TIGR01072">
    <property type="entry name" value="murA"/>
    <property type="match status" value="1"/>
</dbReference>
<dbReference type="NCBIfam" id="NF006873">
    <property type="entry name" value="PRK09369.1"/>
    <property type="match status" value="1"/>
</dbReference>
<dbReference type="PANTHER" id="PTHR43783">
    <property type="entry name" value="UDP-N-ACETYLGLUCOSAMINE 1-CARBOXYVINYLTRANSFERASE"/>
    <property type="match status" value="1"/>
</dbReference>
<dbReference type="PANTHER" id="PTHR43783:SF1">
    <property type="entry name" value="UDP-N-ACETYLGLUCOSAMINE 1-CARBOXYVINYLTRANSFERASE"/>
    <property type="match status" value="1"/>
</dbReference>
<dbReference type="Pfam" id="PF00275">
    <property type="entry name" value="EPSP_synthase"/>
    <property type="match status" value="1"/>
</dbReference>
<dbReference type="SUPFAM" id="SSF55205">
    <property type="entry name" value="EPT/RTPC-like"/>
    <property type="match status" value="1"/>
</dbReference>
<name>MURA_LAWIP</name>
<evidence type="ECO:0000255" key="1">
    <source>
        <dbReference type="HAMAP-Rule" id="MF_00111"/>
    </source>
</evidence>
<comment type="function">
    <text evidence="1">Cell wall formation. Adds enolpyruvyl to UDP-N-acetylglucosamine.</text>
</comment>
<comment type="catalytic activity">
    <reaction evidence="1">
        <text>phosphoenolpyruvate + UDP-N-acetyl-alpha-D-glucosamine = UDP-N-acetyl-3-O-(1-carboxyvinyl)-alpha-D-glucosamine + phosphate</text>
        <dbReference type="Rhea" id="RHEA:18681"/>
        <dbReference type="ChEBI" id="CHEBI:43474"/>
        <dbReference type="ChEBI" id="CHEBI:57705"/>
        <dbReference type="ChEBI" id="CHEBI:58702"/>
        <dbReference type="ChEBI" id="CHEBI:68483"/>
        <dbReference type="EC" id="2.5.1.7"/>
    </reaction>
</comment>
<comment type="pathway">
    <text evidence="1">Cell wall biogenesis; peptidoglycan biosynthesis.</text>
</comment>
<comment type="subcellular location">
    <subcellularLocation>
        <location evidence="1">Cytoplasm</location>
    </subcellularLocation>
</comment>
<comment type="similarity">
    <text evidence="1">Belongs to the EPSP synthase family. MurA subfamily.</text>
</comment>
<proteinExistence type="inferred from homology"/>
<keyword id="KW-0131">Cell cycle</keyword>
<keyword id="KW-0132">Cell division</keyword>
<keyword id="KW-0133">Cell shape</keyword>
<keyword id="KW-0961">Cell wall biogenesis/degradation</keyword>
<keyword id="KW-0963">Cytoplasm</keyword>
<keyword id="KW-0573">Peptidoglycan synthesis</keyword>
<keyword id="KW-0670">Pyruvate</keyword>
<keyword id="KW-1185">Reference proteome</keyword>
<keyword id="KW-0808">Transferase</keyword>
<sequence>MDKLIIEGGYPLKGTVTVSGSKNAALPILIASILANKKVTLHNVPQLRDIRTTIKLLEILGCTIQQTEQCIELTPGTLQHEAPYELVCTMRASILVLGPLLAKLGKAKVAMPGGCAIGARPIDLHIKALEKMGAKFTLKDGYLIGDCTKLKGTHIYLDFPTVGGTENLLIAASIAEGETILENAAQEPEIEDLARFLIACGAIIKGHGTNVIHIQGVPSLNGCTYSIMPDRIEAGTFLTAAAITKGELLISGCPYKELEAIINKFMQMGIHIEKRECGIYVAPIKTLKATDVTTRPFPGFPTDMQAQIMALMSIAYGTSTVNETIFENRFMHVQELARMGANIRLNGHTAIVTGVKELKGAPVMASDLRASASLVLAGLAAKGITTIQRTYHLDRGYEFIEKKLNAVGASIQRTNE</sequence>
<protein>
    <recommendedName>
        <fullName evidence="1">UDP-N-acetylglucosamine 1-carboxyvinyltransferase</fullName>
        <ecNumber evidence="1">2.5.1.7</ecNumber>
    </recommendedName>
    <alternativeName>
        <fullName evidence="1">Enoylpyruvate transferase</fullName>
    </alternativeName>
    <alternativeName>
        <fullName evidence="1">UDP-N-acetylglucosamine enolpyruvyl transferase</fullName>
        <shortName evidence="1">EPT</shortName>
    </alternativeName>
</protein>
<accession>Q1MQ35</accession>
<gene>
    <name evidence="1" type="primary">murA</name>
    <name type="ordered locus">LI0838</name>
</gene>
<reference key="1">
    <citation type="submission" date="2005-11" db="EMBL/GenBank/DDBJ databases">
        <title>The complete genome sequence of Lawsonia intracellularis: the causative agent of proliferative enteropathy.</title>
        <authorList>
            <person name="Kaur K."/>
            <person name="Zhang Q."/>
            <person name="Beckler D."/>
            <person name="Munir S."/>
            <person name="Li L."/>
            <person name="Kinsley K."/>
            <person name="Herron L."/>
            <person name="Peterson A."/>
            <person name="May B."/>
            <person name="Singh S."/>
            <person name="Gebhart C."/>
            <person name="Kapur V."/>
        </authorList>
    </citation>
    <scope>NUCLEOTIDE SEQUENCE [LARGE SCALE GENOMIC DNA]</scope>
    <source>
        <strain>PHE/MN1-00</strain>
    </source>
</reference>
<feature type="chain" id="PRO_1000023050" description="UDP-N-acetylglucosamine 1-carboxyvinyltransferase">
    <location>
        <begin position="1"/>
        <end position="416"/>
    </location>
</feature>
<feature type="active site" description="Proton donor" evidence="1">
    <location>
        <position position="115"/>
    </location>
</feature>
<feature type="binding site" evidence="1">
    <location>
        <begin position="22"/>
        <end position="23"/>
    </location>
    <ligand>
        <name>phosphoenolpyruvate</name>
        <dbReference type="ChEBI" id="CHEBI:58702"/>
    </ligand>
</feature>
<feature type="binding site" evidence="1">
    <location>
        <position position="91"/>
    </location>
    <ligand>
        <name>UDP-N-acetyl-alpha-D-glucosamine</name>
        <dbReference type="ChEBI" id="CHEBI:57705"/>
    </ligand>
</feature>
<feature type="binding site" evidence="1">
    <location>
        <begin position="120"/>
        <end position="124"/>
    </location>
    <ligand>
        <name>UDP-N-acetyl-alpha-D-glucosamine</name>
        <dbReference type="ChEBI" id="CHEBI:57705"/>
    </ligand>
</feature>
<feature type="binding site" evidence="1">
    <location>
        <position position="303"/>
    </location>
    <ligand>
        <name>UDP-N-acetyl-alpha-D-glucosamine</name>
        <dbReference type="ChEBI" id="CHEBI:57705"/>
    </ligand>
</feature>
<feature type="binding site" evidence="1">
    <location>
        <position position="325"/>
    </location>
    <ligand>
        <name>UDP-N-acetyl-alpha-D-glucosamine</name>
        <dbReference type="ChEBI" id="CHEBI:57705"/>
    </ligand>
</feature>
<feature type="modified residue" description="2-(S-cysteinyl)pyruvic acid O-phosphothioketal" evidence="1">
    <location>
        <position position="115"/>
    </location>
</feature>